<protein>
    <recommendedName>
        <fullName evidence="1">Ribosome biogenesis protein erb1</fullName>
    </recommendedName>
    <alternativeName>
        <fullName evidence="1">Eukaryotic ribosome biogenesis protein 1</fullName>
    </alternativeName>
</protein>
<reference key="1">
    <citation type="journal article" date="2003" name="Nature">
        <title>The genome sequence of the filamentous fungus Neurospora crassa.</title>
        <authorList>
            <person name="Galagan J.E."/>
            <person name="Calvo S.E."/>
            <person name="Borkovich K.A."/>
            <person name="Selker E.U."/>
            <person name="Read N.D."/>
            <person name="Jaffe D.B."/>
            <person name="FitzHugh W."/>
            <person name="Ma L.-J."/>
            <person name="Smirnov S."/>
            <person name="Purcell S."/>
            <person name="Rehman B."/>
            <person name="Elkins T."/>
            <person name="Engels R."/>
            <person name="Wang S."/>
            <person name="Nielsen C.B."/>
            <person name="Butler J."/>
            <person name="Endrizzi M."/>
            <person name="Qui D."/>
            <person name="Ianakiev P."/>
            <person name="Bell-Pedersen D."/>
            <person name="Nelson M.A."/>
            <person name="Werner-Washburne M."/>
            <person name="Selitrennikoff C.P."/>
            <person name="Kinsey J.A."/>
            <person name="Braun E.L."/>
            <person name="Zelter A."/>
            <person name="Schulte U."/>
            <person name="Kothe G.O."/>
            <person name="Jedd G."/>
            <person name="Mewes H.-W."/>
            <person name="Staben C."/>
            <person name="Marcotte E."/>
            <person name="Greenberg D."/>
            <person name="Roy A."/>
            <person name="Foley K."/>
            <person name="Naylor J."/>
            <person name="Stange-Thomann N."/>
            <person name="Barrett R."/>
            <person name="Gnerre S."/>
            <person name="Kamal M."/>
            <person name="Kamvysselis M."/>
            <person name="Mauceli E.W."/>
            <person name="Bielke C."/>
            <person name="Rudd S."/>
            <person name="Frishman D."/>
            <person name="Krystofova S."/>
            <person name="Rasmussen C."/>
            <person name="Metzenberg R.L."/>
            <person name="Perkins D.D."/>
            <person name="Kroken S."/>
            <person name="Cogoni C."/>
            <person name="Macino G."/>
            <person name="Catcheside D.E.A."/>
            <person name="Li W."/>
            <person name="Pratt R.J."/>
            <person name="Osmani S.A."/>
            <person name="DeSouza C.P.C."/>
            <person name="Glass N.L."/>
            <person name="Orbach M.J."/>
            <person name="Berglund J.A."/>
            <person name="Voelker R."/>
            <person name="Yarden O."/>
            <person name="Plamann M."/>
            <person name="Seiler S."/>
            <person name="Dunlap J.C."/>
            <person name="Radford A."/>
            <person name="Aramayo R."/>
            <person name="Natvig D.O."/>
            <person name="Alex L.A."/>
            <person name="Mannhaupt G."/>
            <person name="Ebbole D.J."/>
            <person name="Freitag M."/>
            <person name="Paulsen I."/>
            <person name="Sachs M.S."/>
            <person name="Lander E.S."/>
            <person name="Nusbaum C."/>
            <person name="Birren B.W."/>
        </authorList>
    </citation>
    <scope>NUCLEOTIDE SEQUENCE [LARGE SCALE GENOMIC DNA]</scope>
    <source>
        <strain>ATCC 24698 / 74-OR23-1A / CBS 708.71 / DSM 1257 / FGSC 987</strain>
    </source>
</reference>
<feature type="chain" id="PRO_0000370436" description="Ribosome biogenesis protein erb1">
    <location>
        <begin position="1"/>
        <end position="779"/>
    </location>
</feature>
<feature type="repeat" description="WD 1">
    <location>
        <begin position="430"/>
        <end position="469"/>
    </location>
</feature>
<feature type="repeat" description="WD 2">
    <location>
        <begin position="473"/>
        <end position="513"/>
    </location>
</feature>
<feature type="repeat" description="WD 3">
    <location>
        <begin position="564"/>
        <end position="606"/>
    </location>
</feature>
<feature type="repeat" description="WD 4">
    <location>
        <begin position="609"/>
        <end position="647"/>
    </location>
</feature>
<feature type="repeat" description="WD 5">
    <location>
        <begin position="650"/>
        <end position="689"/>
    </location>
</feature>
<feature type="repeat" description="WD 6">
    <location>
        <begin position="693"/>
        <end position="733"/>
    </location>
</feature>
<feature type="repeat" description="WD 7">
    <location>
        <begin position="749"/>
        <end position="779"/>
    </location>
</feature>
<feature type="region of interest" description="Disordered" evidence="2">
    <location>
        <begin position="1"/>
        <end position="124"/>
    </location>
</feature>
<feature type="compositionally biased region" description="Acidic residues" evidence="2">
    <location>
        <begin position="15"/>
        <end position="25"/>
    </location>
</feature>
<feature type="compositionally biased region" description="Acidic residues" evidence="2">
    <location>
        <begin position="34"/>
        <end position="67"/>
    </location>
</feature>
<feature type="compositionally biased region" description="Basic and acidic residues" evidence="2">
    <location>
        <begin position="104"/>
        <end position="124"/>
    </location>
</feature>
<evidence type="ECO:0000255" key="1">
    <source>
        <dbReference type="HAMAP-Rule" id="MF_03027"/>
    </source>
</evidence>
<evidence type="ECO:0000256" key="2">
    <source>
        <dbReference type="SAM" id="MobiDB-lite"/>
    </source>
</evidence>
<comment type="function">
    <text evidence="1">Component of the NOP7 complex, which is required for maturation of the 25S and 5.8S ribosomal RNAs and formation of the 60S ribosome.</text>
</comment>
<comment type="subunit">
    <text evidence="1">Component of the NOP7 complex, composed of erb1, nop7 and ytm1. The complex is held together by erb1, which interacts with nop7 via its N-terminal domain and with ytm1 via a high-affinity interaction between the seven-bladed beta-propeller domains of the 2 proteins. The NOP7 complex associates with the 66S pre-ribosome.</text>
</comment>
<comment type="subcellular location">
    <subcellularLocation>
        <location evidence="1">Nucleus</location>
        <location evidence="1">Nucleolus</location>
    </subcellularLocation>
    <subcellularLocation>
        <location evidence="1">Nucleus</location>
        <location evidence="1">Nucleoplasm</location>
    </subcellularLocation>
</comment>
<comment type="similarity">
    <text evidence="1">Belongs to the WD repeat BOP1/ERB1 family.</text>
</comment>
<name>ERB1_NEUCR</name>
<accession>Q7SEM3</accession>
<dbReference type="EMBL" id="CM002236">
    <property type="protein sequence ID" value="EAA35262.1"/>
    <property type="molecule type" value="Genomic_DNA"/>
</dbReference>
<dbReference type="RefSeq" id="XP_964498.1">
    <property type="nucleotide sequence ID" value="XM_959405.2"/>
</dbReference>
<dbReference type="SMR" id="Q7SEM3"/>
<dbReference type="FunCoup" id="Q7SEM3">
    <property type="interactions" value="976"/>
</dbReference>
<dbReference type="STRING" id="367110.Q7SEM3"/>
<dbReference type="PaxDb" id="5141-EFNCRP00000002818"/>
<dbReference type="EnsemblFungi" id="EAA35262">
    <property type="protein sequence ID" value="EAA35262"/>
    <property type="gene ID" value="NCU03321"/>
</dbReference>
<dbReference type="GeneID" id="3880647"/>
<dbReference type="KEGG" id="ncr:NCU03321"/>
<dbReference type="VEuPathDB" id="FungiDB:NCU03321"/>
<dbReference type="HOGENOM" id="CLU_011390_0_1_1"/>
<dbReference type="InParanoid" id="Q7SEM3"/>
<dbReference type="OMA" id="MRPAKGE"/>
<dbReference type="OrthoDB" id="5571054at2759"/>
<dbReference type="Proteomes" id="UP000001805">
    <property type="component" value="Chromosome 1, Linkage Group I"/>
</dbReference>
<dbReference type="GO" id="GO:0005654">
    <property type="term" value="C:nucleoplasm"/>
    <property type="evidence" value="ECO:0007669"/>
    <property type="project" value="UniProtKB-SubCell"/>
</dbReference>
<dbReference type="GO" id="GO:0070545">
    <property type="term" value="C:PeBoW complex"/>
    <property type="evidence" value="ECO:0000318"/>
    <property type="project" value="GO_Central"/>
</dbReference>
<dbReference type="GO" id="GO:0030687">
    <property type="term" value="C:preribosome, large subunit precursor"/>
    <property type="evidence" value="ECO:0000318"/>
    <property type="project" value="GO_Central"/>
</dbReference>
<dbReference type="GO" id="GO:0070180">
    <property type="term" value="F:large ribosomal subunit rRNA binding"/>
    <property type="evidence" value="ECO:0007669"/>
    <property type="project" value="EnsemblFungi"/>
</dbReference>
<dbReference type="GO" id="GO:0043021">
    <property type="term" value="F:ribonucleoprotein complex binding"/>
    <property type="evidence" value="ECO:0000318"/>
    <property type="project" value="GO_Central"/>
</dbReference>
<dbReference type="GO" id="GO:0000466">
    <property type="term" value="P:maturation of 5.8S rRNA from tricistronic rRNA transcript (SSU-rRNA, 5.8S rRNA, LSU-rRNA)"/>
    <property type="evidence" value="ECO:0007669"/>
    <property type="project" value="UniProtKB-UniRule"/>
</dbReference>
<dbReference type="GO" id="GO:0000463">
    <property type="term" value="P:maturation of LSU-rRNA from tricistronic rRNA transcript (SSU-rRNA, 5.8S rRNA, LSU-rRNA)"/>
    <property type="evidence" value="ECO:0000318"/>
    <property type="project" value="GO_Central"/>
</dbReference>
<dbReference type="FunFam" id="2.130.10.10:FF:000061">
    <property type="entry name" value="Ribosome biogenesis protein BOP1 homolog"/>
    <property type="match status" value="1"/>
</dbReference>
<dbReference type="Gene3D" id="2.130.10.10">
    <property type="entry name" value="YVTN repeat-like/Quinoprotein amine dehydrogenase"/>
    <property type="match status" value="1"/>
</dbReference>
<dbReference type="HAMAP" id="MF_03027">
    <property type="entry name" value="BOP1"/>
    <property type="match status" value="1"/>
</dbReference>
<dbReference type="InterPro" id="IPR028598">
    <property type="entry name" value="BOP1/Erb1"/>
</dbReference>
<dbReference type="InterPro" id="IPR012953">
    <property type="entry name" value="BOP1_N_dom"/>
</dbReference>
<dbReference type="InterPro" id="IPR015943">
    <property type="entry name" value="WD40/YVTN_repeat-like_dom_sf"/>
</dbReference>
<dbReference type="InterPro" id="IPR019775">
    <property type="entry name" value="WD40_repeat_CS"/>
</dbReference>
<dbReference type="InterPro" id="IPR036322">
    <property type="entry name" value="WD40_repeat_dom_sf"/>
</dbReference>
<dbReference type="InterPro" id="IPR001680">
    <property type="entry name" value="WD40_rpt"/>
</dbReference>
<dbReference type="PANTHER" id="PTHR17605:SF0">
    <property type="entry name" value="RIBOSOME BIOGENESIS PROTEIN BOP1"/>
    <property type="match status" value="1"/>
</dbReference>
<dbReference type="PANTHER" id="PTHR17605">
    <property type="entry name" value="RIBOSOME BIOGENESIS PROTEIN BOP1 BLOCK OF PROLIFERATION 1 PROTEIN"/>
    <property type="match status" value="1"/>
</dbReference>
<dbReference type="Pfam" id="PF08145">
    <property type="entry name" value="BOP1NT"/>
    <property type="match status" value="1"/>
</dbReference>
<dbReference type="Pfam" id="PF00400">
    <property type="entry name" value="WD40"/>
    <property type="match status" value="2"/>
</dbReference>
<dbReference type="SMART" id="SM01035">
    <property type="entry name" value="BOP1NT"/>
    <property type="match status" value="1"/>
</dbReference>
<dbReference type="SMART" id="SM00320">
    <property type="entry name" value="WD40"/>
    <property type="match status" value="7"/>
</dbReference>
<dbReference type="SUPFAM" id="SSF50978">
    <property type="entry name" value="WD40 repeat-like"/>
    <property type="match status" value="1"/>
</dbReference>
<dbReference type="PROSITE" id="PS00678">
    <property type="entry name" value="WD_REPEATS_1"/>
    <property type="match status" value="1"/>
</dbReference>
<dbReference type="PROSITE" id="PS50082">
    <property type="entry name" value="WD_REPEATS_2"/>
    <property type="match status" value="2"/>
</dbReference>
<dbReference type="PROSITE" id="PS50294">
    <property type="entry name" value="WD_REPEATS_REGION"/>
    <property type="match status" value="2"/>
</dbReference>
<organism>
    <name type="scientific">Neurospora crassa (strain ATCC 24698 / 74-OR23-1A / CBS 708.71 / DSM 1257 / FGSC 987)</name>
    <dbReference type="NCBI Taxonomy" id="367110"/>
    <lineage>
        <taxon>Eukaryota</taxon>
        <taxon>Fungi</taxon>
        <taxon>Dikarya</taxon>
        <taxon>Ascomycota</taxon>
        <taxon>Pezizomycotina</taxon>
        <taxon>Sordariomycetes</taxon>
        <taxon>Sordariomycetidae</taxon>
        <taxon>Sordariales</taxon>
        <taxon>Sordariaceae</taxon>
        <taxon>Neurospora</taxon>
    </lineage>
</organism>
<proteinExistence type="inferred from homology"/>
<sequence>MGPKATEKKRKVQDAEPESDDEIAPDFDGALSQSEDEFDSDFDDNEHEQDGEQESGSEASDDEDEEGSLLSDDIPSDAEGDKAMGKLVLEDEEEELEIEIPGVDPKRPEKDDGDKNYRIEKDANGNERYVYDEIDPVYDSDDSDAQEAPNTIGNIPMSFYDSYPHIGYDINGKKIMRPATGDALDALLDSIEVPKGWTGLTDIHTGNPLNLNDDELELVRRVQMGMIPNELENPYPETVEYFTGIEEKMPLSAAPEPKRRFLPSKNEAKKIMKLVRAIREGRILPYKPPEEREKEEEEEEQYFDIWQDEVPQEVNPLHIPAPKLPPPGFDMSYNPPAEYLPTKEEREEWEKLDPEEREKEYLPQKYDSLRKVPGYGEIVKERFERCMDLYLAPRVRKNRLNIDPNSLLPKLPSPSELKPFPTVAQTVFRGHDGRVRSVAIDPTGVAVASGGDDGTVRVWELLTGRQVWSVKLSSEEAVNTVRWRPAKDSFILSAAVGEDVYLMVPTHASVTPALDQASRDILSAGFGYATNGQQHGAAPGKEPPAKWARPGAKLEDEGVLIRITVRSTVKVINWHRKGDHFATVSPSGQRSSVAIHTLSKHLTQIPFRKLSGLAQTASFHPLRPLFFVATQRTIRCYDLQKLELVKVVQPGAKWISSFDIHPGGDNLIVGSYDKRLLWHDLDLSIRPYKTMRFHSEAVRQVKYHRGGLPLFADASDDGTLQIFHGKVPNDQLENPTIVPVKVLKGHKVVNKLGVLDMDWHPREPWCVSAGADGTIRLWM</sequence>
<gene>
    <name type="primary">erb1</name>
    <name type="ORF">NCU03321</name>
</gene>
<keyword id="KW-0539">Nucleus</keyword>
<keyword id="KW-1185">Reference proteome</keyword>
<keyword id="KW-0677">Repeat</keyword>
<keyword id="KW-0690">Ribosome biogenesis</keyword>
<keyword id="KW-0698">rRNA processing</keyword>
<keyword id="KW-0853">WD repeat</keyword>